<protein>
    <recommendedName>
        <fullName evidence="1">Protein AaeX</fullName>
    </recommendedName>
</protein>
<organism>
    <name type="scientific">Shigella flexneri serotype 5b (strain 8401)</name>
    <dbReference type="NCBI Taxonomy" id="373384"/>
    <lineage>
        <taxon>Bacteria</taxon>
        <taxon>Pseudomonadati</taxon>
        <taxon>Pseudomonadota</taxon>
        <taxon>Gammaproteobacteria</taxon>
        <taxon>Enterobacterales</taxon>
        <taxon>Enterobacteriaceae</taxon>
        <taxon>Shigella</taxon>
    </lineage>
</organism>
<evidence type="ECO:0000255" key="1">
    <source>
        <dbReference type="HAMAP-Rule" id="MF_01546"/>
    </source>
</evidence>
<evidence type="ECO:0000305" key="2"/>
<accession>Q0T046</accession>
<name>AAEX_SHIF8</name>
<proteinExistence type="inferred from homology"/>
<dbReference type="EMBL" id="CP000266">
    <property type="protein sequence ID" value="ABF05319.1"/>
    <property type="status" value="ALT_INIT"/>
    <property type="molecule type" value="Genomic_DNA"/>
</dbReference>
<dbReference type="RefSeq" id="WP_000051841.1">
    <property type="nucleotide sequence ID" value="NC_008258.1"/>
</dbReference>
<dbReference type="GeneID" id="93778743"/>
<dbReference type="KEGG" id="sfv:SFV_3269"/>
<dbReference type="HOGENOM" id="CLU_188292_0_0_6"/>
<dbReference type="Proteomes" id="UP000000659">
    <property type="component" value="Chromosome"/>
</dbReference>
<dbReference type="GO" id="GO:0005886">
    <property type="term" value="C:plasma membrane"/>
    <property type="evidence" value="ECO:0007669"/>
    <property type="project" value="UniProtKB-SubCell"/>
</dbReference>
<dbReference type="HAMAP" id="MF_01546">
    <property type="entry name" value="AaeX"/>
    <property type="match status" value="1"/>
</dbReference>
<dbReference type="InterPro" id="IPR012451">
    <property type="entry name" value="DUF1656"/>
</dbReference>
<dbReference type="NCBIfam" id="NF008615">
    <property type="entry name" value="PRK11594.1"/>
    <property type="match status" value="1"/>
</dbReference>
<dbReference type="Pfam" id="PF07869">
    <property type="entry name" value="DUF1656"/>
    <property type="match status" value="1"/>
</dbReference>
<sequence length="67" mass="7847">MSLFPVIVVFGLSFPPIFFELLLSLAIFWLVRRVLVPTGIYDFVWHPALFNTALYCCLFYLISRLFV</sequence>
<reference key="1">
    <citation type="journal article" date="2006" name="BMC Genomics">
        <title>Complete genome sequence of Shigella flexneri 5b and comparison with Shigella flexneri 2a.</title>
        <authorList>
            <person name="Nie H."/>
            <person name="Yang F."/>
            <person name="Zhang X."/>
            <person name="Yang J."/>
            <person name="Chen L."/>
            <person name="Wang J."/>
            <person name="Xiong Z."/>
            <person name="Peng J."/>
            <person name="Sun L."/>
            <person name="Dong J."/>
            <person name="Xue Y."/>
            <person name="Xu X."/>
            <person name="Chen S."/>
            <person name="Yao Z."/>
            <person name="Shen Y."/>
            <person name="Jin Q."/>
        </authorList>
    </citation>
    <scope>NUCLEOTIDE SEQUENCE [LARGE SCALE GENOMIC DNA]</scope>
    <source>
        <strain>8401</strain>
    </source>
</reference>
<feature type="chain" id="PRO_0000300578" description="Protein AaeX">
    <location>
        <begin position="1"/>
        <end position="67"/>
    </location>
</feature>
<feature type="transmembrane region" description="Helical" evidence="1">
    <location>
        <begin position="3"/>
        <end position="23"/>
    </location>
</feature>
<feature type="transmembrane region" description="Helical" evidence="1">
    <location>
        <begin position="43"/>
        <end position="63"/>
    </location>
</feature>
<keyword id="KW-1003">Cell membrane</keyword>
<keyword id="KW-0472">Membrane</keyword>
<keyword id="KW-0812">Transmembrane</keyword>
<keyword id="KW-1133">Transmembrane helix</keyword>
<comment type="subcellular location">
    <subcellularLocation>
        <location evidence="1">Cell membrane</location>
        <topology evidence="1">Multi-pass membrane protein</topology>
    </subcellularLocation>
</comment>
<comment type="similarity">
    <text evidence="1">Belongs to the AaeX family.</text>
</comment>
<comment type="sequence caution" evidence="2">
    <conflict type="erroneous initiation">
        <sequence resource="EMBL-CDS" id="ABF05319"/>
    </conflict>
</comment>
<gene>
    <name evidence="1" type="primary">aaeX</name>
    <name type="ordered locus">SFV_3269</name>
</gene>